<comment type="catalytic activity">
    <reaction evidence="2">
        <text>Preferential cleavage: Arg-|-Xaa, Lys-|-Xaa.</text>
        <dbReference type="EC" id="3.4.21.4"/>
    </reaction>
</comment>
<comment type="subcellular location">
    <subcellularLocation>
        <location evidence="2">Secreted</location>
    </subcellularLocation>
</comment>
<comment type="tissue specificity">
    <text evidence="5">Expressed in larval carcasses and gut, and adult gut.</text>
</comment>
<comment type="developmental stage">
    <text evidence="5">Ovarial and mature eggs, larvae and adult.</text>
</comment>
<comment type="similarity">
    <text evidence="4">Belongs to the peptidase S1 family.</text>
</comment>
<keyword id="KW-0222">Digestion</keyword>
<keyword id="KW-1015">Disulfide bond</keyword>
<keyword id="KW-0325">Glycoprotein</keyword>
<keyword id="KW-0378">Hydrolase</keyword>
<keyword id="KW-0645">Protease</keyword>
<keyword id="KW-0964">Secreted</keyword>
<keyword id="KW-0720">Serine protease</keyword>
<keyword id="KW-0732">Signal</keyword>
<keyword id="KW-0865">Zymogen</keyword>
<protein>
    <recommendedName>
        <fullName>Trypsin</fullName>
        <ecNumber>3.4.21.4</ecNumber>
    </recommendedName>
</protein>
<proteinExistence type="evidence at transcript level"/>
<accession>O97399</accession>
<accession>P81524</accession>
<reference evidence="6 7" key="1">
    <citation type="journal article" date="1999" name="Insect Biochem. Mol. Biol.">
        <title>Molecular cloning of cDNAs encoding a range of digestive enzymes from a phytophagous beetle, Phaedon cochleariae.</title>
        <authorList>
            <person name="Girard C."/>
            <person name="Jouanin L."/>
        </authorList>
    </citation>
    <scope>NUCLEOTIDE SEQUENCE [MRNA]</scope>
    <scope>TISSUE SPECIFICITY</scope>
    <scope>DEVELOPMENTAL STAGE</scope>
    <source>
        <tissue evidence="5">Larval gut</tissue>
    </source>
</reference>
<feature type="signal peptide" evidence="3">
    <location>
        <begin position="1"/>
        <end position="16"/>
    </location>
</feature>
<feature type="propeptide" id="PRO_0000314681" description="Activation peptide" evidence="1">
    <location>
        <begin position="17"/>
        <end position="29"/>
    </location>
</feature>
<feature type="chain" id="PRO_5000147327" description="Trypsin" evidence="2 3">
    <location>
        <begin position="30"/>
        <end position="258"/>
    </location>
</feature>
<feature type="domain" description="Peptidase S1" evidence="4">
    <location>
        <begin position="30"/>
        <end position="257"/>
    </location>
</feature>
<feature type="active site" description="Charge relay system" evidence="2">
    <location>
        <position position="70"/>
    </location>
</feature>
<feature type="active site" description="Charge relay system" evidence="2">
    <location>
        <position position="117"/>
    </location>
</feature>
<feature type="active site" description="Charge relay system" evidence="2">
    <location>
        <position position="213"/>
    </location>
</feature>
<feature type="site" description="Required for specificity" evidence="2">
    <location>
        <position position="207"/>
    </location>
</feature>
<feature type="glycosylation site" description="N-linked (GlcNAc...) asparagine" evidence="3">
    <location>
        <position position="110"/>
    </location>
</feature>
<feature type="glycosylation site" description="N-linked (GlcNAc...) asparagine" evidence="3">
    <location>
        <position position="130"/>
    </location>
</feature>
<feature type="glycosylation site" description="N-linked (GlcNAc...) asparagine" evidence="3">
    <location>
        <position position="188"/>
    </location>
</feature>
<feature type="disulfide bond" evidence="2 4">
    <location>
        <begin position="55"/>
        <end position="71"/>
    </location>
</feature>
<feature type="disulfide bond" evidence="2 4">
    <location>
        <begin position="182"/>
        <end position="197"/>
    </location>
</feature>
<feature type="disulfide bond" evidence="2 4">
    <location>
        <begin position="209"/>
        <end position="233"/>
    </location>
</feature>
<evidence type="ECO:0000250" key="1"/>
<evidence type="ECO:0000250" key="2">
    <source>
        <dbReference type="UniProtKB" id="P35049"/>
    </source>
</evidence>
<evidence type="ECO:0000255" key="3"/>
<evidence type="ECO:0000255" key="4">
    <source>
        <dbReference type="PROSITE-ProRule" id="PRU00274"/>
    </source>
</evidence>
<evidence type="ECO:0000269" key="5">
    <source>
    </source>
</evidence>
<evidence type="ECO:0000305" key="6"/>
<evidence type="ECO:0000312" key="7">
    <source>
        <dbReference type="EMBL" id="CAA76929.1"/>
    </source>
</evidence>
<name>TRYP_PHACE</name>
<organism>
    <name type="scientific">Phaedon cochleariae</name>
    <name type="common">Mustard beetle</name>
    <dbReference type="NCBI Taxonomy" id="80249"/>
    <lineage>
        <taxon>Eukaryota</taxon>
        <taxon>Metazoa</taxon>
        <taxon>Ecdysozoa</taxon>
        <taxon>Arthropoda</taxon>
        <taxon>Hexapoda</taxon>
        <taxon>Insecta</taxon>
        <taxon>Pterygota</taxon>
        <taxon>Neoptera</taxon>
        <taxon>Endopterygota</taxon>
        <taxon>Coleoptera</taxon>
        <taxon>Polyphaga</taxon>
        <taxon>Cucujiformia</taxon>
        <taxon>Chrysomeloidea</taxon>
        <taxon>Chrysomelidae</taxon>
        <taxon>Chrysomelinae</taxon>
        <taxon>Chrysomelini</taxon>
        <taxon>Phaedon</taxon>
    </lineage>
</organism>
<sequence length="258" mass="28071">MIRFTLALAVIGVTFAASTPQIETNPNLEIIGGHDANIIDYPWQISFQHRLHHFCGGFLISDTWVVTAAHCIYEGYSDTENLNIRVGSSEWSAKGKLHDVKRYITHPQYNITTMDNDIALLELALPVDLNQSVRPAKLPVAGQEIPDNAQLTITGWGATYVGGYNEYTLQVVTIPTVNINVCQSAITNDTITNNMFCAGLIGVGGKDSCSGDSGGPAVIDGQVVGIVSWGYSCADPKYPGIYTKVSAFRDWINEETEI</sequence>
<dbReference type="EC" id="3.4.21.4"/>
<dbReference type="EMBL" id="Y17905">
    <property type="protein sequence ID" value="CAA76929.1"/>
    <property type="molecule type" value="mRNA"/>
</dbReference>
<dbReference type="SMR" id="O97399"/>
<dbReference type="MEROPS" id="S01.130"/>
<dbReference type="OrthoDB" id="10059102at2759"/>
<dbReference type="GO" id="GO:0005576">
    <property type="term" value="C:extracellular region"/>
    <property type="evidence" value="ECO:0007669"/>
    <property type="project" value="UniProtKB-SubCell"/>
</dbReference>
<dbReference type="GO" id="GO:0004252">
    <property type="term" value="F:serine-type endopeptidase activity"/>
    <property type="evidence" value="ECO:0007669"/>
    <property type="project" value="UniProtKB-EC"/>
</dbReference>
<dbReference type="GO" id="GO:0007586">
    <property type="term" value="P:digestion"/>
    <property type="evidence" value="ECO:0007669"/>
    <property type="project" value="UniProtKB-KW"/>
</dbReference>
<dbReference type="GO" id="GO:0006508">
    <property type="term" value="P:proteolysis"/>
    <property type="evidence" value="ECO:0007669"/>
    <property type="project" value="UniProtKB-KW"/>
</dbReference>
<dbReference type="CDD" id="cd00190">
    <property type="entry name" value="Tryp_SPc"/>
    <property type="match status" value="1"/>
</dbReference>
<dbReference type="FunFam" id="2.40.10.10:FF:000077">
    <property type="entry name" value="Predicted protein"/>
    <property type="match status" value="1"/>
</dbReference>
<dbReference type="Gene3D" id="2.40.10.10">
    <property type="entry name" value="Trypsin-like serine proteases"/>
    <property type="match status" value="1"/>
</dbReference>
<dbReference type="InterPro" id="IPR050430">
    <property type="entry name" value="Peptidase_S1"/>
</dbReference>
<dbReference type="InterPro" id="IPR009003">
    <property type="entry name" value="Peptidase_S1_PA"/>
</dbReference>
<dbReference type="InterPro" id="IPR043504">
    <property type="entry name" value="Peptidase_S1_PA_chymotrypsin"/>
</dbReference>
<dbReference type="InterPro" id="IPR001314">
    <property type="entry name" value="Peptidase_S1A"/>
</dbReference>
<dbReference type="InterPro" id="IPR001254">
    <property type="entry name" value="Trypsin_dom"/>
</dbReference>
<dbReference type="InterPro" id="IPR018114">
    <property type="entry name" value="TRYPSIN_HIS"/>
</dbReference>
<dbReference type="PANTHER" id="PTHR24276:SF91">
    <property type="entry name" value="AT26814P-RELATED"/>
    <property type="match status" value="1"/>
</dbReference>
<dbReference type="PANTHER" id="PTHR24276">
    <property type="entry name" value="POLYSERASE-RELATED"/>
    <property type="match status" value="1"/>
</dbReference>
<dbReference type="Pfam" id="PF00089">
    <property type="entry name" value="Trypsin"/>
    <property type="match status" value="1"/>
</dbReference>
<dbReference type="PRINTS" id="PR00722">
    <property type="entry name" value="CHYMOTRYPSIN"/>
</dbReference>
<dbReference type="SMART" id="SM00020">
    <property type="entry name" value="Tryp_SPc"/>
    <property type="match status" value="1"/>
</dbReference>
<dbReference type="SUPFAM" id="SSF50494">
    <property type="entry name" value="Trypsin-like serine proteases"/>
    <property type="match status" value="1"/>
</dbReference>
<dbReference type="PROSITE" id="PS50240">
    <property type="entry name" value="TRYPSIN_DOM"/>
    <property type="match status" value="1"/>
</dbReference>
<dbReference type="PROSITE" id="PS00134">
    <property type="entry name" value="TRYPSIN_HIS"/>
    <property type="match status" value="1"/>
</dbReference>